<organism>
    <name type="scientific">Streptococcus pyogenes serotype M1</name>
    <dbReference type="NCBI Taxonomy" id="301447"/>
    <lineage>
        <taxon>Bacteria</taxon>
        <taxon>Bacillati</taxon>
        <taxon>Bacillota</taxon>
        <taxon>Bacilli</taxon>
        <taxon>Lactobacillales</taxon>
        <taxon>Streptococcaceae</taxon>
        <taxon>Streptococcus</taxon>
    </lineage>
</organism>
<proteinExistence type="inferred from homology"/>
<feature type="chain" id="PRO_0000386304" description="GTPase Obg">
    <location>
        <begin position="1"/>
        <end position="437"/>
    </location>
</feature>
<feature type="domain" description="Obg" evidence="3">
    <location>
        <begin position="2"/>
        <end position="160"/>
    </location>
</feature>
<feature type="domain" description="OBG-type G" evidence="1">
    <location>
        <begin position="161"/>
        <end position="338"/>
    </location>
</feature>
<feature type="domain" description="OCT" evidence="2">
    <location>
        <begin position="359"/>
        <end position="437"/>
    </location>
</feature>
<feature type="binding site" evidence="1">
    <location>
        <begin position="167"/>
        <end position="174"/>
    </location>
    <ligand>
        <name>GTP</name>
        <dbReference type="ChEBI" id="CHEBI:37565"/>
    </ligand>
</feature>
<feature type="binding site" evidence="1">
    <location>
        <position position="174"/>
    </location>
    <ligand>
        <name>Mg(2+)</name>
        <dbReference type="ChEBI" id="CHEBI:18420"/>
    </ligand>
</feature>
<feature type="binding site" evidence="1">
    <location>
        <begin position="192"/>
        <end position="196"/>
    </location>
    <ligand>
        <name>GTP</name>
        <dbReference type="ChEBI" id="CHEBI:37565"/>
    </ligand>
</feature>
<feature type="binding site" evidence="1">
    <location>
        <position position="194"/>
    </location>
    <ligand>
        <name>Mg(2+)</name>
        <dbReference type="ChEBI" id="CHEBI:18420"/>
    </ligand>
</feature>
<feature type="binding site" evidence="1">
    <location>
        <begin position="214"/>
        <end position="217"/>
    </location>
    <ligand>
        <name>GTP</name>
        <dbReference type="ChEBI" id="CHEBI:37565"/>
    </ligand>
</feature>
<feature type="binding site" evidence="1">
    <location>
        <begin position="284"/>
        <end position="287"/>
    </location>
    <ligand>
        <name>GTP</name>
        <dbReference type="ChEBI" id="CHEBI:37565"/>
    </ligand>
</feature>
<feature type="binding site" evidence="1">
    <location>
        <begin position="319"/>
        <end position="321"/>
    </location>
    <ligand>
        <name>GTP</name>
        <dbReference type="ChEBI" id="CHEBI:37565"/>
    </ligand>
</feature>
<gene>
    <name evidence="1" type="primary">obg</name>
    <name type="ordered locus">SPy_1333</name>
    <name type="ordered locus">M5005_Spy1088</name>
</gene>
<dbReference type="EC" id="3.6.5.-" evidence="1"/>
<dbReference type="EMBL" id="AE004092">
    <property type="protein sequence ID" value="AAK34168.1"/>
    <property type="molecule type" value="Genomic_DNA"/>
</dbReference>
<dbReference type="EMBL" id="CP000017">
    <property type="protein sequence ID" value="AAZ51706.1"/>
    <property type="molecule type" value="Genomic_DNA"/>
</dbReference>
<dbReference type="RefSeq" id="NP_269447.3">
    <property type="nucleotide sequence ID" value="NC_002737.2"/>
</dbReference>
<dbReference type="SMR" id="Q99Z94"/>
<dbReference type="PaxDb" id="1314-HKU360_01068"/>
<dbReference type="KEGG" id="spy:SPy_1333"/>
<dbReference type="KEGG" id="spz:M5005_Spy1088"/>
<dbReference type="PATRIC" id="fig|160490.10.peg.1166"/>
<dbReference type="HOGENOM" id="CLU_011747_2_1_9"/>
<dbReference type="OMA" id="VVFDWEP"/>
<dbReference type="Proteomes" id="UP000000750">
    <property type="component" value="Chromosome"/>
</dbReference>
<dbReference type="GO" id="GO:0005737">
    <property type="term" value="C:cytoplasm"/>
    <property type="evidence" value="ECO:0007669"/>
    <property type="project" value="UniProtKB-SubCell"/>
</dbReference>
<dbReference type="GO" id="GO:0005525">
    <property type="term" value="F:GTP binding"/>
    <property type="evidence" value="ECO:0007669"/>
    <property type="project" value="UniProtKB-UniRule"/>
</dbReference>
<dbReference type="GO" id="GO:0003924">
    <property type="term" value="F:GTPase activity"/>
    <property type="evidence" value="ECO:0007669"/>
    <property type="project" value="UniProtKB-UniRule"/>
</dbReference>
<dbReference type="GO" id="GO:0000287">
    <property type="term" value="F:magnesium ion binding"/>
    <property type="evidence" value="ECO:0007669"/>
    <property type="project" value="InterPro"/>
</dbReference>
<dbReference type="GO" id="GO:0042254">
    <property type="term" value="P:ribosome biogenesis"/>
    <property type="evidence" value="ECO:0007669"/>
    <property type="project" value="UniProtKB-UniRule"/>
</dbReference>
<dbReference type="CDD" id="cd01898">
    <property type="entry name" value="Obg"/>
    <property type="match status" value="1"/>
</dbReference>
<dbReference type="FunFam" id="2.70.210.12:FF:000001">
    <property type="entry name" value="GTPase Obg"/>
    <property type="match status" value="1"/>
</dbReference>
<dbReference type="FunFam" id="3.40.50.300:FF:000515">
    <property type="entry name" value="GTPase Obg"/>
    <property type="match status" value="1"/>
</dbReference>
<dbReference type="Gene3D" id="3.30.300.350">
    <property type="entry name" value="GTP-binding protein OBG, C-terminal domain"/>
    <property type="match status" value="1"/>
</dbReference>
<dbReference type="Gene3D" id="2.70.210.12">
    <property type="entry name" value="GTP1/OBG domain"/>
    <property type="match status" value="1"/>
</dbReference>
<dbReference type="Gene3D" id="3.40.50.300">
    <property type="entry name" value="P-loop containing nucleotide triphosphate hydrolases"/>
    <property type="match status" value="1"/>
</dbReference>
<dbReference type="HAMAP" id="MF_01454">
    <property type="entry name" value="GTPase_Obg"/>
    <property type="match status" value="1"/>
</dbReference>
<dbReference type="InterPro" id="IPR031167">
    <property type="entry name" value="G_OBG"/>
</dbReference>
<dbReference type="InterPro" id="IPR006073">
    <property type="entry name" value="GTP-bd"/>
</dbReference>
<dbReference type="InterPro" id="IPR014100">
    <property type="entry name" value="GTP-bd_Obg/CgtA"/>
</dbReference>
<dbReference type="InterPro" id="IPR036346">
    <property type="entry name" value="GTP-bd_prot_GTP1/OBG_C_sf"/>
</dbReference>
<dbReference type="InterPro" id="IPR006074">
    <property type="entry name" value="GTP1-OBG_CS"/>
</dbReference>
<dbReference type="InterPro" id="IPR006169">
    <property type="entry name" value="GTP1_OBG_dom"/>
</dbReference>
<dbReference type="InterPro" id="IPR036726">
    <property type="entry name" value="GTP1_OBG_dom_sf"/>
</dbReference>
<dbReference type="InterPro" id="IPR045086">
    <property type="entry name" value="OBG_GTPase"/>
</dbReference>
<dbReference type="InterPro" id="IPR015349">
    <property type="entry name" value="OCT_dom"/>
</dbReference>
<dbReference type="InterPro" id="IPR027417">
    <property type="entry name" value="P-loop_NTPase"/>
</dbReference>
<dbReference type="InterPro" id="IPR005225">
    <property type="entry name" value="Small_GTP-bd"/>
</dbReference>
<dbReference type="NCBIfam" id="TIGR02729">
    <property type="entry name" value="Obg_CgtA"/>
    <property type="match status" value="1"/>
</dbReference>
<dbReference type="NCBIfam" id="TIGR03595">
    <property type="entry name" value="Obg_CgtA_exten"/>
    <property type="match status" value="1"/>
</dbReference>
<dbReference type="NCBIfam" id="NF008954">
    <property type="entry name" value="PRK12296.1"/>
    <property type="match status" value="1"/>
</dbReference>
<dbReference type="NCBIfam" id="NF008955">
    <property type="entry name" value="PRK12297.1"/>
    <property type="match status" value="1"/>
</dbReference>
<dbReference type="NCBIfam" id="NF008956">
    <property type="entry name" value="PRK12299.1"/>
    <property type="match status" value="1"/>
</dbReference>
<dbReference type="NCBIfam" id="TIGR00231">
    <property type="entry name" value="small_GTP"/>
    <property type="match status" value="1"/>
</dbReference>
<dbReference type="PANTHER" id="PTHR11702">
    <property type="entry name" value="DEVELOPMENTALLY REGULATED GTP-BINDING PROTEIN-RELATED"/>
    <property type="match status" value="1"/>
</dbReference>
<dbReference type="PANTHER" id="PTHR11702:SF31">
    <property type="entry name" value="MITOCHONDRIAL RIBOSOME-ASSOCIATED GTPASE 2"/>
    <property type="match status" value="1"/>
</dbReference>
<dbReference type="Pfam" id="PF09269">
    <property type="entry name" value="DUF1967"/>
    <property type="match status" value="1"/>
</dbReference>
<dbReference type="Pfam" id="PF01018">
    <property type="entry name" value="GTP1_OBG"/>
    <property type="match status" value="1"/>
</dbReference>
<dbReference type="Pfam" id="PF01926">
    <property type="entry name" value="MMR_HSR1"/>
    <property type="match status" value="1"/>
</dbReference>
<dbReference type="PIRSF" id="PIRSF002401">
    <property type="entry name" value="GTP_bd_Obg/CgtA"/>
    <property type="match status" value="1"/>
</dbReference>
<dbReference type="PRINTS" id="PR00326">
    <property type="entry name" value="GTP1OBG"/>
</dbReference>
<dbReference type="SUPFAM" id="SSF102741">
    <property type="entry name" value="Obg GTP-binding protein C-terminal domain"/>
    <property type="match status" value="1"/>
</dbReference>
<dbReference type="SUPFAM" id="SSF82051">
    <property type="entry name" value="Obg GTP-binding protein N-terminal domain"/>
    <property type="match status" value="1"/>
</dbReference>
<dbReference type="SUPFAM" id="SSF52540">
    <property type="entry name" value="P-loop containing nucleoside triphosphate hydrolases"/>
    <property type="match status" value="1"/>
</dbReference>
<dbReference type="PROSITE" id="PS51710">
    <property type="entry name" value="G_OBG"/>
    <property type="match status" value="1"/>
</dbReference>
<dbReference type="PROSITE" id="PS00905">
    <property type="entry name" value="GTP1_OBG"/>
    <property type="match status" value="1"/>
</dbReference>
<dbReference type="PROSITE" id="PS51883">
    <property type="entry name" value="OBG"/>
    <property type="match status" value="1"/>
</dbReference>
<dbReference type="PROSITE" id="PS51881">
    <property type="entry name" value="OCT"/>
    <property type="match status" value="1"/>
</dbReference>
<sequence>MSMFLDTAKISVQAGRGGDGMVAFRREKYVPNGGPWGGDGGKGGSVIFRVDEGLRTLMDFRYNRKFKAKSGEKGMTKGMHGRGAEDLIVFVPQGTTVRDAETGKVITDLVEHGQEVVIAKGGRGGRGNIRFATPRNPAPEIAENGEPGEERQLELELKILADVGLVGFPSVGKSTLLSVVSSAKPKIGAYHFTTIVPNLGMVRTKSGDSFAMADLPGLIEGASQGVGLGTQFLRHIERTRVILHVIDMSASEGRDPYEDYVSINNELETYNLRLMERPQIIVANKMDIPEAQENLKAFKKKLAAQYDEFDDLPMIFPISSLAHQGLENLLEATAELLAKTDEFLLYDESDLVDEEAYYGFAETEKDFEITRDDDATWVLSGEKLERLFVMTNMERDESIMKFARQLRGMGVDEALRERGAKDGDPVRIGKFEFEFVD</sequence>
<accession>Q99Z94</accession>
<accession>Q48Y66</accession>
<reference key="1">
    <citation type="journal article" date="2001" name="Proc. Natl. Acad. Sci. U.S.A.">
        <title>Complete genome sequence of an M1 strain of Streptococcus pyogenes.</title>
        <authorList>
            <person name="Ferretti J.J."/>
            <person name="McShan W.M."/>
            <person name="Ajdic D.J."/>
            <person name="Savic D.J."/>
            <person name="Savic G."/>
            <person name="Lyon K."/>
            <person name="Primeaux C."/>
            <person name="Sezate S."/>
            <person name="Suvorov A.N."/>
            <person name="Kenton S."/>
            <person name="Lai H.S."/>
            <person name="Lin S.P."/>
            <person name="Qian Y."/>
            <person name="Jia H.G."/>
            <person name="Najar F.Z."/>
            <person name="Ren Q."/>
            <person name="Zhu H."/>
            <person name="Song L."/>
            <person name="White J."/>
            <person name="Yuan X."/>
            <person name="Clifton S.W."/>
            <person name="Roe B.A."/>
            <person name="McLaughlin R.E."/>
        </authorList>
    </citation>
    <scope>NUCLEOTIDE SEQUENCE [LARGE SCALE GENOMIC DNA]</scope>
    <source>
        <strain>ATCC 700294 / SF370 / Serotype M1</strain>
    </source>
</reference>
<reference key="2">
    <citation type="journal article" date="2005" name="J. Infect. Dis.">
        <title>Evolutionary origin and emergence of a highly successful clone of serotype M1 group A Streptococcus involved multiple horizontal gene transfer events.</title>
        <authorList>
            <person name="Sumby P."/>
            <person name="Porcella S.F."/>
            <person name="Madrigal A.G."/>
            <person name="Barbian K.D."/>
            <person name="Virtaneva K."/>
            <person name="Ricklefs S.M."/>
            <person name="Sturdevant D.E."/>
            <person name="Graham M.R."/>
            <person name="Vuopio-Varkila J."/>
            <person name="Hoe N.P."/>
            <person name="Musser J.M."/>
        </authorList>
    </citation>
    <scope>NUCLEOTIDE SEQUENCE [LARGE SCALE GENOMIC DNA]</scope>
    <source>
        <strain>ATCC BAA-947 / MGAS5005 / Serotype M1</strain>
    </source>
</reference>
<comment type="function">
    <text evidence="1">An essential GTPase which binds GTP, GDP and possibly (p)ppGpp with moderate affinity, with high nucleotide exchange rates and a fairly low GTP hydrolysis rate. Plays a role in control of the cell cycle, stress response, ribosome biogenesis and in those bacteria that undergo differentiation, in morphogenesis control.</text>
</comment>
<comment type="cofactor">
    <cofactor evidence="1">
        <name>Mg(2+)</name>
        <dbReference type="ChEBI" id="CHEBI:18420"/>
    </cofactor>
</comment>
<comment type="subunit">
    <text evidence="1">Monomer.</text>
</comment>
<comment type="subcellular location">
    <subcellularLocation>
        <location evidence="1">Cytoplasm</location>
    </subcellularLocation>
</comment>
<comment type="similarity">
    <text evidence="1">Belongs to the TRAFAC class OBG-HflX-like GTPase superfamily. OBG GTPase family.</text>
</comment>
<protein>
    <recommendedName>
        <fullName evidence="1">GTPase Obg</fullName>
        <ecNumber evidence="1">3.6.5.-</ecNumber>
    </recommendedName>
    <alternativeName>
        <fullName evidence="1">GTP-binding protein Obg</fullName>
    </alternativeName>
</protein>
<keyword id="KW-0963">Cytoplasm</keyword>
<keyword id="KW-0342">GTP-binding</keyword>
<keyword id="KW-0378">Hydrolase</keyword>
<keyword id="KW-0460">Magnesium</keyword>
<keyword id="KW-0479">Metal-binding</keyword>
<keyword id="KW-0547">Nucleotide-binding</keyword>
<keyword id="KW-1185">Reference proteome</keyword>
<name>OBG_STRP1</name>
<evidence type="ECO:0000255" key="1">
    <source>
        <dbReference type="HAMAP-Rule" id="MF_01454"/>
    </source>
</evidence>
<evidence type="ECO:0000255" key="2">
    <source>
        <dbReference type="PROSITE-ProRule" id="PRU01229"/>
    </source>
</evidence>
<evidence type="ECO:0000255" key="3">
    <source>
        <dbReference type="PROSITE-ProRule" id="PRU01231"/>
    </source>
</evidence>